<sequence length="220" mass="23626">MMTALSCHGGCMDTHQLDAAEVRVLGALLEKQALTPDAYPLTLNALVGACNQLTSREPVMQLSESDASAALDALIAKKLVAERLPAGSRVAKYEHRLNYEWNIDGARLAALCLLTLRGPQTSAEIRARAGRIYSFSGVDEVETALNALADKYPPLAAKLERQPGEREARWCHLLSGEPQILPAQACEVIDVGLTGRVAALEAEVSALKAMVLALEQRLNG</sequence>
<reference key="1">
    <citation type="journal article" date="2003" name="Proc. Natl. Acad. Sci. U.S.A.">
        <title>The complete genome sequence of Chromobacterium violaceum reveals remarkable and exploitable bacterial adaptability.</title>
        <authorList>
            <person name="Vasconcelos A.T.R."/>
            <person name="de Almeida D.F."/>
            <person name="Hungria M."/>
            <person name="Guimaraes C.T."/>
            <person name="Antonio R.V."/>
            <person name="Almeida F.C."/>
            <person name="de Almeida L.G.P."/>
            <person name="de Almeida R."/>
            <person name="Alves-Gomes J.A."/>
            <person name="Andrade E.M."/>
            <person name="Araripe J."/>
            <person name="de Araujo M.F.F."/>
            <person name="Astolfi-Filho S."/>
            <person name="Azevedo V."/>
            <person name="Baptista A.J."/>
            <person name="Bataus L.A.M."/>
            <person name="Batista J.S."/>
            <person name="Belo A."/>
            <person name="van den Berg C."/>
            <person name="Bogo M."/>
            <person name="Bonatto S."/>
            <person name="Bordignon J."/>
            <person name="Brigido M.M."/>
            <person name="Brito C.A."/>
            <person name="Brocchi M."/>
            <person name="Burity H.A."/>
            <person name="Camargo A.A."/>
            <person name="Cardoso D.D.P."/>
            <person name="Carneiro N.P."/>
            <person name="Carraro D.M."/>
            <person name="Carvalho C.M.B."/>
            <person name="Cascardo J.C.M."/>
            <person name="Cavada B.S."/>
            <person name="Chueire L.M.O."/>
            <person name="Creczynski-Pasa T.B."/>
            <person name="Cunha-Junior N.C."/>
            <person name="Fagundes N."/>
            <person name="Falcao C.L."/>
            <person name="Fantinatti F."/>
            <person name="Farias I.P."/>
            <person name="Felipe M.S.S."/>
            <person name="Ferrari L.P."/>
            <person name="Ferro J.A."/>
            <person name="Ferro M.I.T."/>
            <person name="Franco G.R."/>
            <person name="Freitas N.S.A."/>
            <person name="Furlan L.R."/>
            <person name="Gazzinelli R.T."/>
            <person name="Gomes E.A."/>
            <person name="Goncalves P.R."/>
            <person name="Grangeiro T.B."/>
            <person name="Grattapaglia D."/>
            <person name="Grisard E.C."/>
            <person name="Hanna E.S."/>
            <person name="Jardim S.N."/>
            <person name="Laurino J."/>
            <person name="Leoi L.C.T."/>
            <person name="Lima L.F.A."/>
            <person name="Loureiro M.F."/>
            <person name="Lyra M.C.C.P."/>
            <person name="Madeira H.M.F."/>
            <person name="Manfio G.P."/>
            <person name="Maranhao A.Q."/>
            <person name="Martins W.S."/>
            <person name="di Mauro S.M.Z."/>
            <person name="de Medeiros S.R.B."/>
            <person name="Meissner R.V."/>
            <person name="Moreira M.A.M."/>
            <person name="Nascimento F.F."/>
            <person name="Nicolas M.F."/>
            <person name="Oliveira J.G."/>
            <person name="Oliveira S.C."/>
            <person name="Paixao R.F.C."/>
            <person name="Parente J.A."/>
            <person name="Pedrosa F.O."/>
            <person name="Pena S.D.J."/>
            <person name="Pereira J.O."/>
            <person name="Pereira M."/>
            <person name="Pinto L.S.R.C."/>
            <person name="Pinto L.S."/>
            <person name="Porto J.I.R."/>
            <person name="Potrich D.P."/>
            <person name="Ramalho-Neto C.E."/>
            <person name="Reis A.M.M."/>
            <person name="Rigo L.U."/>
            <person name="Rondinelli E."/>
            <person name="Santos E.B.P."/>
            <person name="Santos F.R."/>
            <person name="Schneider M.P.C."/>
            <person name="Seuanez H.N."/>
            <person name="Silva A.M.R."/>
            <person name="da Silva A.L.C."/>
            <person name="Silva D.W."/>
            <person name="Silva R."/>
            <person name="Simoes I.C."/>
            <person name="Simon D."/>
            <person name="Soares C.M.A."/>
            <person name="Soares R.B.A."/>
            <person name="Souza E.M."/>
            <person name="Souza K.R.L."/>
            <person name="Souza R.C."/>
            <person name="Steffens M.B.R."/>
            <person name="Steindel M."/>
            <person name="Teixeira S.R."/>
            <person name="Urmenyi T."/>
            <person name="Vettore A."/>
            <person name="Wassem R."/>
            <person name="Zaha A."/>
            <person name="Simpson A.J.G."/>
        </authorList>
    </citation>
    <scope>NUCLEOTIDE SEQUENCE [LARGE SCALE GENOMIC DNA]</scope>
    <source>
        <strain>ATCC 12472 / DSM 30191 / JCM 1249 / CCUG 213 / NBRC 12614 / NCIMB 9131 / NCTC 9757 / MK</strain>
    </source>
</reference>
<gene>
    <name type="ordered locus">CV_4303</name>
</gene>
<organism>
    <name type="scientific">Chromobacterium violaceum (strain ATCC 12472 / DSM 30191 / JCM 1249 / CCUG 213 / NBRC 12614 / NCIMB 9131 / NCTC 9757 / MK)</name>
    <dbReference type="NCBI Taxonomy" id="243365"/>
    <lineage>
        <taxon>Bacteria</taxon>
        <taxon>Pseudomonadati</taxon>
        <taxon>Pseudomonadota</taxon>
        <taxon>Betaproteobacteria</taxon>
        <taxon>Neisseriales</taxon>
        <taxon>Chromobacteriaceae</taxon>
        <taxon>Chromobacterium</taxon>
    </lineage>
</organism>
<name>Y4303_CHRVO</name>
<dbReference type="EMBL" id="AE016825">
    <property type="protein sequence ID" value="AAQ61963.1"/>
    <property type="molecule type" value="Genomic_DNA"/>
</dbReference>
<dbReference type="SMR" id="Q7NQ37"/>
<dbReference type="STRING" id="243365.CV_4303"/>
<dbReference type="KEGG" id="cvi:CV_4303"/>
<dbReference type="eggNOG" id="COG3132">
    <property type="taxonomic scope" value="Bacteria"/>
</dbReference>
<dbReference type="HOGENOM" id="CLU_057831_1_0_4"/>
<dbReference type="OrthoDB" id="9784785at2"/>
<dbReference type="Proteomes" id="UP000001424">
    <property type="component" value="Chromosome"/>
</dbReference>
<dbReference type="Gene3D" id="1.10.10.10">
    <property type="entry name" value="Winged helix-like DNA-binding domain superfamily/Winged helix DNA-binding domain"/>
    <property type="match status" value="2"/>
</dbReference>
<dbReference type="HAMAP" id="MF_01584">
    <property type="entry name" value="UPF0502"/>
    <property type="match status" value="1"/>
</dbReference>
<dbReference type="InterPro" id="IPR007432">
    <property type="entry name" value="DUF480"/>
</dbReference>
<dbReference type="InterPro" id="IPR036388">
    <property type="entry name" value="WH-like_DNA-bd_sf"/>
</dbReference>
<dbReference type="InterPro" id="IPR036390">
    <property type="entry name" value="WH_DNA-bd_sf"/>
</dbReference>
<dbReference type="PANTHER" id="PTHR38768">
    <property type="entry name" value="UPF0502 PROTEIN YCEH"/>
    <property type="match status" value="1"/>
</dbReference>
<dbReference type="PANTHER" id="PTHR38768:SF1">
    <property type="entry name" value="UPF0502 PROTEIN YCEH"/>
    <property type="match status" value="1"/>
</dbReference>
<dbReference type="Pfam" id="PF04337">
    <property type="entry name" value="DUF480"/>
    <property type="match status" value="1"/>
</dbReference>
<dbReference type="SUPFAM" id="SSF46785">
    <property type="entry name" value="Winged helix' DNA-binding domain"/>
    <property type="match status" value="2"/>
</dbReference>
<feature type="chain" id="PRO_0000309381" description="UPF0502 protein CV_4303">
    <location>
        <begin position="1"/>
        <end position="220"/>
    </location>
</feature>
<accession>Q7NQ37</accession>
<protein>
    <recommendedName>
        <fullName evidence="1">UPF0502 protein CV_4303</fullName>
    </recommendedName>
</protein>
<keyword id="KW-1185">Reference proteome</keyword>
<evidence type="ECO:0000255" key="1">
    <source>
        <dbReference type="HAMAP-Rule" id="MF_01584"/>
    </source>
</evidence>
<comment type="similarity">
    <text evidence="1">Belongs to the UPF0502 family.</text>
</comment>
<proteinExistence type="inferred from homology"/>